<dbReference type="EC" id="2.7.4.6" evidence="1"/>
<dbReference type="EMBL" id="BX908798">
    <property type="protein sequence ID" value="CAF23090.1"/>
    <property type="status" value="ALT_FRAME"/>
    <property type="molecule type" value="Genomic_DNA"/>
</dbReference>
<dbReference type="SMR" id="Q6MEA9"/>
<dbReference type="STRING" id="264201.pc0366"/>
<dbReference type="eggNOG" id="COG0105">
    <property type="taxonomic scope" value="Bacteria"/>
</dbReference>
<dbReference type="HOGENOM" id="CLU_1146356_0_0_0"/>
<dbReference type="Proteomes" id="UP000000529">
    <property type="component" value="Chromosome"/>
</dbReference>
<dbReference type="GO" id="GO:0005737">
    <property type="term" value="C:cytoplasm"/>
    <property type="evidence" value="ECO:0007669"/>
    <property type="project" value="UniProtKB-SubCell"/>
</dbReference>
<dbReference type="GO" id="GO:0005524">
    <property type="term" value="F:ATP binding"/>
    <property type="evidence" value="ECO:0007669"/>
    <property type="project" value="UniProtKB-UniRule"/>
</dbReference>
<dbReference type="GO" id="GO:0046872">
    <property type="term" value="F:metal ion binding"/>
    <property type="evidence" value="ECO:0007669"/>
    <property type="project" value="UniProtKB-KW"/>
</dbReference>
<dbReference type="GO" id="GO:0004550">
    <property type="term" value="F:nucleoside diphosphate kinase activity"/>
    <property type="evidence" value="ECO:0007669"/>
    <property type="project" value="UniProtKB-UniRule"/>
</dbReference>
<dbReference type="GO" id="GO:0006241">
    <property type="term" value="P:CTP biosynthetic process"/>
    <property type="evidence" value="ECO:0007669"/>
    <property type="project" value="UniProtKB-UniRule"/>
</dbReference>
<dbReference type="GO" id="GO:0006183">
    <property type="term" value="P:GTP biosynthetic process"/>
    <property type="evidence" value="ECO:0007669"/>
    <property type="project" value="UniProtKB-UniRule"/>
</dbReference>
<dbReference type="GO" id="GO:0006228">
    <property type="term" value="P:UTP biosynthetic process"/>
    <property type="evidence" value="ECO:0007669"/>
    <property type="project" value="UniProtKB-UniRule"/>
</dbReference>
<dbReference type="CDD" id="cd04413">
    <property type="entry name" value="NDPk_I"/>
    <property type="match status" value="1"/>
</dbReference>
<dbReference type="FunFam" id="3.30.70.141:FF:000001">
    <property type="entry name" value="Nucleoside diphosphate kinase"/>
    <property type="match status" value="1"/>
</dbReference>
<dbReference type="Gene3D" id="3.30.70.141">
    <property type="entry name" value="Nucleoside diphosphate kinase-like domain"/>
    <property type="match status" value="1"/>
</dbReference>
<dbReference type="HAMAP" id="MF_00451">
    <property type="entry name" value="NDP_kinase"/>
    <property type="match status" value="1"/>
</dbReference>
<dbReference type="InterPro" id="IPR034907">
    <property type="entry name" value="NDK-like_dom"/>
</dbReference>
<dbReference type="InterPro" id="IPR036850">
    <property type="entry name" value="NDK-like_dom_sf"/>
</dbReference>
<dbReference type="InterPro" id="IPR001564">
    <property type="entry name" value="Nucleoside_diP_kinase"/>
</dbReference>
<dbReference type="NCBIfam" id="NF001908">
    <property type="entry name" value="PRK00668.1"/>
    <property type="match status" value="1"/>
</dbReference>
<dbReference type="PANTHER" id="PTHR11349">
    <property type="entry name" value="NUCLEOSIDE DIPHOSPHATE KINASE"/>
    <property type="match status" value="1"/>
</dbReference>
<dbReference type="Pfam" id="PF00334">
    <property type="entry name" value="NDK"/>
    <property type="match status" value="1"/>
</dbReference>
<dbReference type="PRINTS" id="PR01243">
    <property type="entry name" value="NUCDPKINASE"/>
</dbReference>
<dbReference type="SMART" id="SM00562">
    <property type="entry name" value="NDK"/>
    <property type="match status" value="1"/>
</dbReference>
<dbReference type="SUPFAM" id="SSF54919">
    <property type="entry name" value="Nucleoside diphosphate kinase, NDK"/>
    <property type="match status" value="1"/>
</dbReference>
<dbReference type="PROSITE" id="PS51374">
    <property type="entry name" value="NDPK_LIKE"/>
    <property type="match status" value="1"/>
</dbReference>
<accession>Q6MEA9</accession>
<reference key="1">
    <citation type="journal article" date="2004" name="Science">
        <title>Illuminating the evolutionary history of chlamydiae.</title>
        <authorList>
            <person name="Horn M."/>
            <person name="Collingro A."/>
            <person name="Schmitz-Esser S."/>
            <person name="Beier C.L."/>
            <person name="Purkhold U."/>
            <person name="Fartmann B."/>
            <person name="Brandt P."/>
            <person name="Nyakatura G.J."/>
            <person name="Droege M."/>
            <person name="Frishman D."/>
            <person name="Rattei T."/>
            <person name="Mewes H.-W."/>
            <person name="Wagner M."/>
        </authorList>
    </citation>
    <scope>NUCLEOTIDE SEQUENCE [LARGE SCALE GENOMIC DNA]</scope>
    <source>
        <strain>UWE25</strain>
    </source>
</reference>
<name>NDK1_PARUW</name>
<sequence>MASEQTLSIIKPDAVQNNYIGEIISRFEQAGLKIAAIKMTTLTKDQASKFYAIHKDRPFYNDLVNFMSSGPVVVMVLEGNQAIAKNRELMGATDPKKAEKGTLRADFAESMSRNAVHGSDSSETAEEEVLFFFKPDEITHR</sequence>
<proteinExistence type="inferred from homology"/>
<comment type="function">
    <text evidence="1">Major role in the synthesis of nucleoside triphosphates other than ATP. The ATP gamma phosphate is transferred to the NDP beta phosphate via a ping-pong mechanism, using a phosphorylated active-site intermediate.</text>
</comment>
<comment type="catalytic activity">
    <reaction evidence="1">
        <text>a 2'-deoxyribonucleoside 5'-diphosphate + ATP = a 2'-deoxyribonucleoside 5'-triphosphate + ADP</text>
        <dbReference type="Rhea" id="RHEA:44640"/>
        <dbReference type="ChEBI" id="CHEBI:30616"/>
        <dbReference type="ChEBI" id="CHEBI:61560"/>
        <dbReference type="ChEBI" id="CHEBI:73316"/>
        <dbReference type="ChEBI" id="CHEBI:456216"/>
        <dbReference type="EC" id="2.7.4.6"/>
    </reaction>
</comment>
<comment type="catalytic activity">
    <reaction evidence="1">
        <text>a ribonucleoside 5'-diphosphate + ATP = a ribonucleoside 5'-triphosphate + ADP</text>
        <dbReference type="Rhea" id="RHEA:18113"/>
        <dbReference type="ChEBI" id="CHEBI:30616"/>
        <dbReference type="ChEBI" id="CHEBI:57930"/>
        <dbReference type="ChEBI" id="CHEBI:61557"/>
        <dbReference type="ChEBI" id="CHEBI:456216"/>
        <dbReference type="EC" id="2.7.4.6"/>
    </reaction>
</comment>
<comment type="cofactor">
    <cofactor evidence="1">
        <name>Mg(2+)</name>
        <dbReference type="ChEBI" id="CHEBI:18420"/>
    </cofactor>
</comment>
<comment type="subunit">
    <text evidence="1">Homotetramer.</text>
</comment>
<comment type="subcellular location">
    <subcellularLocation>
        <location evidence="1">Cytoplasm</location>
    </subcellularLocation>
</comment>
<comment type="similarity">
    <text evidence="1">Belongs to the NDK family.</text>
</comment>
<comment type="sequence caution" evidence="2">
    <conflict type="frameshift">
        <sequence resource="EMBL-CDS" id="CAF23090"/>
    </conflict>
</comment>
<gene>
    <name evidence="1" type="primary">ndk1</name>
    <name type="ordered locus">pc0366</name>
</gene>
<evidence type="ECO:0000255" key="1">
    <source>
        <dbReference type="HAMAP-Rule" id="MF_00451"/>
    </source>
</evidence>
<evidence type="ECO:0000305" key="2"/>
<feature type="chain" id="PRO_0000226566" description="Nucleoside diphosphate kinase 1">
    <location>
        <begin position="1"/>
        <end position="141"/>
    </location>
</feature>
<feature type="active site" description="Pros-phosphohistidine intermediate" evidence="1">
    <location>
        <position position="117"/>
    </location>
</feature>
<feature type="binding site" evidence="1">
    <location>
        <position position="11"/>
    </location>
    <ligand>
        <name>ATP</name>
        <dbReference type="ChEBI" id="CHEBI:30616"/>
    </ligand>
</feature>
<feature type="binding site" evidence="1">
    <location>
        <position position="59"/>
    </location>
    <ligand>
        <name>ATP</name>
        <dbReference type="ChEBI" id="CHEBI:30616"/>
    </ligand>
</feature>
<feature type="binding site" evidence="1">
    <location>
        <position position="87"/>
    </location>
    <ligand>
        <name>ATP</name>
        <dbReference type="ChEBI" id="CHEBI:30616"/>
    </ligand>
</feature>
<feature type="binding site" evidence="1">
    <location>
        <position position="93"/>
    </location>
    <ligand>
        <name>ATP</name>
        <dbReference type="ChEBI" id="CHEBI:30616"/>
    </ligand>
</feature>
<feature type="binding site" evidence="1">
    <location>
        <position position="104"/>
    </location>
    <ligand>
        <name>ATP</name>
        <dbReference type="ChEBI" id="CHEBI:30616"/>
    </ligand>
</feature>
<feature type="binding site" evidence="1">
    <location>
        <position position="114"/>
    </location>
    <ligand>
        <name>ATP</name>
        <dbReference type="ChEBI" id="CHEBI:30616"/>
    </ligand>
</feature>
<protein>
    <recommendedName>
        <fullName evidence="1">Nucleoside diphosphate kinase 1</fullName>
        <shortName evidence="1">NDK 1</shortName>
        <shortName evidence="1">NDP kinase 1</shortName>
        <ecNumber evidence="1">2.7.4.6</ecNumber>
    </recommendedName>
    <alternativeName>
        <fullName evidence="1">Nucleoside-2-P kinase 1</fullName>
    </alternativeName>
</protein>
<organism>
    <name type="scientific">Protochlamydia amoebophila (strain UWE25)</name>
    <dbReference type="NCBI Taxonomy" id="264201"/>
    <lineage>
        <taxon>Bacteria</taxon>
        <taxon>Pseudomonadati</taxon>
        <taxon>Chlamydiota</taxon>
        <taxon>Chlamydiia</taxon>
        <taxon>Parachlamydiales</taxon>
        <taxon>Parachlamydiaceae</taxon>
        <taxon>Candidatus Protochlamydia</taxon>
    </lineage>
</organism>
<keyword id="KW-0067">ATP-binding</keyword>
<keyword id="KW-0963">Cytoplasm</keyword>
<keyword id="KW-0418">Kinase</keyword>
<keyword id="KW-0460">Magnesium</keyword>
<keyword id="KW-0479">Metal-binding</keyword>
<keyword id="KW-0546">Nucleotide metabolism</keyword>
<keyword id="KW-0547">Nucleotide-binding</keyword>
<keyword id="KW-0597">Phosphoprotein</keyword>
<keyword id="KW-1185">Reference proteome</keyword>
<keyword id="KW-0808">Transferase</keyword>